<gene>
    <name type="primary">pab1</name>
    <name type="ORF">ACLA_030250</name>
</gene>
<comment type="function">
    <text evidence="1">Binds the poly(A) tail of mRNA. Appears to be an important mediator of the multiple roles of the poly(A) tail in mRNA biogenesis, stability and translation. In the nucleus, involved in both mRNA cleavage and polyadenylation. Is also required for efficient mRNA export to the cytoplasm. Acts in concert with a poly(A)-specific nuclease (PAN) to affect poly(A) tail shortening, which may occur concomitantly with either nucleocytoplasmic mRNA transport or translational initiation. In the cytoplasm, stimulates translation initiation and regulates mRNA decay through translation termination-coupled poly(A) shortening, probably mediated by PAN (By similarity).</text>
</comment>
<comment type="subcellular location">
    <subcellularLocation>
        <location evidence="1">Cytoplasm</location>
    </subcellularLocation>
    <subcellularLocation>
        <location evidence="1">Nucleus</location>
    </subcellularLocation>
</comment>
<comment type="similarity">
    <text evidence="5">Belongs to the polyadenylate-binding protein type-1 family.</text>
</comment>
<keyword id="KW-0963">Cytoplasm</keyword>
<keyword id="KW-0507">mRNA processing</keyword>
<keyword id="KW-0509">mRNA transport</keyword>
<keyword id="KW-0539">Nucleus</keyword>
<keyword id="KW-1185">Reference proteome</keyword>
<keyword id="KW-0677">Repeat</keyword>
<keyword id="KW-0694">RNA-binding</keyword>
<keyword id="KW-0810">Translation regulation</keyword>
<keyword id="KW-0813">Transport</keyword>
<sequence>MSAEVSTTPAADNVNGTPEATNAAATSAPEVTAVESSSPTSPNNNNQPHSASLYVGELDPSVTEAMLYELFSSIGQVASIRVCRDAVTRRSLGYAYVNYNNTADGERALEDLNYTLIKGKPCRIMWSQRDPALRKTGQGNVFIKNLDSAIDNKALHDTFAAFGNILSCKVAQDEFGNSKGYGFVHYETAEAANNAIKHVNGMLLNDKKVFVGHHISKKDRQSKFDEMKANFTNIYIKNIDPDVTEEEFRKIFEQFGEITSATLSRDPEGKSRGFGFVNYSTHESAQAAVDEMHDKEVKTQKLYVGRAQKKHEREEELRKQYEAARLEKASKYQGVNLYVKNLTDDVDDEKLRELFGPYGTITSAKVMRDSTPAERTETPDSEKEKEVNKENEKKEDEEKAAEEKPKESDEEKKDETKKSDKKLLGKSKGFGFVCFSSPDEASKAVTEMNQRMVNGKPLYVALAQRKDVRRSQLEASIQARNTIRQQQAAAAAGMPQPYMQPAVFYGPGQQGFIPAGQRGGMPFAPQPGMVMGIPGGRPGQYPGPFPGQQGGRGMGPNQQMPPNFQGIPMGAMQGPGGIPNGMGYPQAMGQVQFGRGGGRGQVPGMPMGQGMRGPGYQGRGGPQGGPRPQGGRGQNAAAQPAAGREEAPAGALTAQALNAAAPPQQKQMLGEALYPKIQAQQPELAGKITGMLLEMDNTELLGLLEDDDALRAKVDEALSVYDEYMKNKGEGEAPADADKPKEAAKETATEENKS</sequence>
<feature type="chain" id="PRO_0000295379" description="Polyadenylate-binding protein, cytoplasmic and nuclear">
    <location>
        <begin position="1"/>
        <end position="754"/>
    </location>
</feature>
<feature type="domain" description="RRM 1" evidence="2">
    <location>
        <begin position="51"/>
        <end position="129"/>
    </location>
</feature>
<feature type="domain" description="RRM 2" evidence="2">
    <location>
        <begin position="139"/>
        <end position="216"/>
    </location>
</feature>
<feature type="domain" description="RRM 3" evidence="2">
    <location>
        <begin position="232"/>
        <end position="309"/>
    </location>
</feature>
<feature type="domain" description="RRM 4" evidence="2">
    <location>
        <begin position="335"/>
        <end position="465"/>
    </location>
</feature>
<feature type="domain" description="PABC" evidence="3">
    <location>
        <begin position="649"/>
        <end position="726"/>
    </location>
</feature>
<feature type="region of interest" description="Disordered" evidence="4">
    <location>
        <begin position="1"/>
        <end position="52"/>
    </location>
</feature>
<feature type="region of interest" description="Disordered" evidence="4">
    <location>
        <begin position="365"/>
        <end position="420"/>
    </location>
</feature>
<feature type="region of interest" description="Disordered" evidence="4">
    <location>
        <begin position="595"/>
        <end position="648"/>
    </location>
</feature>
<feature type="region of interest" description="Disordered" evidence="4">
    <location>
        <begin position="729"/>
        <end position="754"/>
    </location>
</feature>
<feature type="compositionally biased region" description="Polar residues" evidence="4">
    <location>
        <begin position="1"/>
        <end position="25"/>
    </location>
</feature>
<feature type="compositionally biased region" description="Low complexity" evidence="4">
    <location>
        <begin position="36"/>
        <end position="46"/>
    </location>
</feature>
<feature type="compositionally biased region" description="Basic and acidic residues" evidence="4">
    <location>
        <begin position="366"/>
        <end position="420"/>
    </location>
</feature>
<feature type="compositionally biased region" description="Gly residues" evidence="4">
    <location>
        <begin position="610"/>
        <end position="633"/>
    </location>
</feature>
<feature type="compositionally biased region" description="Low complexity" evidence="4">
    <location>
        <begin position="634"/>
        <end position="648"/>
    </location>
</feature>
<accession>A1CRM1</accession>
<reference key="1">
    <citation type="journal article" date="2008" name="PLoS Genet.">
        <title>Genomic islands in the pathogenic filamentous fungus Aspergillus fumigatus.</title>
        <authorList>
            <person name="Fedorova N.D."/>
            <person name="Khaldi N."/>
            <person name="Joardar V.S."/>
            <person name="Maiti R."/>
            <person name="Amedeo P."/>
            <person name="Anderson M.J."/>
            <person name="Crabtree J."/>
            <person name="Silva J.C."/>
            <person name="Badger J.H."/>
            <person name="Albarraq A."/>
            <person name="Angiuoli S."/>
            <person name="Bussey H."/>
            <person name="Bowyer P."/>
            <person name="Cotty P.J."/>
            <person name="Dyer P.S."/>
            <person name="Egan A."/>
            <person name="Galens K."/>
            <person name="Fraser-Liggett C.M."/>
            <person name="Haas B.J."/>
            <person name="Inman J.M."/>
            <person name="Kent R."/>
            <person name="Lemieux S."/>
            <person name="Malavazi I."/>
            <person name="Orvis J."/>
            <person name="Roemer T."/>
            <person name="Ronning C.M."/>
            <person name="Sundaram J.P."/>
            <person name="Sutton G."/>
            <person name="Turner G."/>
            <person name="Venter J.C."/>
            <person name="White O.R."/>
            <person name="Whitty B.R."/>
            <person name="Youngman P."/>
            <person name="Wolfe K.H."/>
            <person name="Goldman G.H."/>
            <person name="Wortman J.R."/>
            <person name="Jiang B."/>
            <person name="Denning D.W."/>
            <person name="Nierman W.C."/>
        </authorList>
    </citation>
    <scope>NUCLEOTIDE SEQUENCE [LARGE SCALE GENOMIC DNA]</scope>
    <source>
        <strain>ATCC 1007 / CBS 513.65 / DSM 816 / NCTC 3887 / NRRL 1 / QM 1276 / 107</strain>
    </source>
</reference>
<organism>
    <name type="scientific">Aspergillus clavatus (strain ATCC 1007 / CBS 513.65 / DSM 816 / NCTC 3887 / NRRL 1 / QM 1276 / 107)</name>
    <dbReference type="NCBI Taxonomy" id="344612"/>
    <lineage>
        <taxon>Eukaryota</taxon>
        <taxon>Fungi</taxon>
        <taxon>Dikarya</taxon>
        <taxon>Ascomycota</taxon>
        <taxon>Pezizomycotina</taxon>
        <taxon>Eurotiomycetes</taxon>
        <taxon>Eurotiomycetidae</taxon>
        <taxon>Eurotiales</taxon>
        <taxon>Aspergillaceae</taxon>
        <taxon>Aspergillus</taxon>
        <taxon>Aspergillus subgen. Fumigati</taxon>
    </lineage>
</organism>
<dbReference type="EMBL" id="DS027059">
    <property type="protein sequence ID" value="EAW08292.1"/>
    <property type="molecule type" value="Genomic_DNA"/>
</dbReference>
<dbReference type="RefSeq" id="XP_001269718.1">
    <property type="nucleotide sequence ID" value="XM_001269717.1"/>
</dbReference>
<dbReference type="SMR" id="A1CRM1"/>
<dbReference type="STRING" id="344612.A1CRM1"/>
<dbReference type="EnsemblFungi" id="EAW08292">
    <property type="protein sequence ID" value="EAW08292"/>
    <property type="gene ID" value="ACLA_030250"/>
</dbReference>
<dbReference type="GeneID" id="4701947"/>
<dbReference type="KEGG" id="act:ACLA_030250"/>
<dbReference type="VEuPathDB" id="FungiDB:ACLA_030250"/>
<dbReference type="eggNOG" id="KOG0123">
    <property type="taxonomic scope" value="Eukaryota"/>
</dbReference>
<dbReference type="HOGENOM" id="CLU_012062_22_4_1"/>
<dbReference type="OMA" id="QQPGFMP"/>
<dbReference type="OrthoDB" id="19742at2759"/>
<dbReference type="Proteomes" id="UP000006701">
    <property type="component" value="Unassembled WGS sequence"/>
</dbReference>
<dbReference type="GO" id="GO:0005737">
    <property type="term" value="C:cytoplasm"/>
    <property type="evidence" value="ECO:0007669"/>
    <property type="project" value="UniProtKB-SubCell"/>
</dbReference>
<dbReference type="GO" id="GO:0005634">
    <property type="term" value="C:nucleus"/>
    <property type="evidence" value="ECO:0007669"/>
    <property type="project" value="UniProtKB-SubCell"/>
</dbReference>
<dbReference type="GO" id="GO:0003723">
    <property type="term" value="F:RNA binding"/>
    <property type="evidence" value="ECO:0007669"/>
    <property type="project" value="UniProtKB-KW"/>
</dbReference>
<dbReference type="GO" id="GO:0006397">
    <property type="term" value="P:mRNA processing"/>
    <property type="evidence" value="ECO:0007669"/>
    <property type="project" value="UniProtKB-KW"/>
</dbReference>
<dbReference type="GO" id="GO:0051028">
    <property type="term" value="P:mRNA transport"/>
    <property type="evidence" value="ECO:0007669"/>
    <property type="project" value="UniProtKB-KW"/>
</dbReference>
<dbReference type="GO" id="GO:0006417">
    <property type="term" value="P:regulation of translation"/>
    <property type="evidence" value="ECO:0007669"/>
    <property type="project" value="UniProtKB-KW"/>
</dbReference>
<dbReference type="CDD" id="cd12378">
    <property type="entry name" value="RRM1_I_PABPs"/>
    <property type="match status" value="1"/>
</dbReference>
<dbReference type="CDD" id="cd12379">
    <property type="entry name" value="RRM2_I_PABPs"/>
    <property type="match status" value="1"/>
</dbReference>
<dbReference type="CDD" id="cd12380">
    <property type="entry name" value="RRM3_I_PABPs"/>
    <property type="match status" value="1"/>
</dbReference>
<dbReference type="CDD" id="cd12381">
    <property type="entry name" value="RRM4_I_PABPs"/>
    <property type="match status" value="1"/>
</dbReference>
<dbReference type="FunFam" id="1.10.1900.10:FF:000004">
    <property type="entry name" value="Polyadenylate-binding protein"/>
    <property type="match status" value="1"/>
</dbReference>
<dbReference type="FunFam" id="3.30.70.330:FF:000003">
    <property type="entry name" value="Polyadenylate-binding protein"/>
    <property type="match status" value="1"/>
</dbReference>
<dbReference type="FunFam" id="3.30.70.330:FF:000355">
    <property type="entry name" value="Polyadenylate-binding protein"/>
    <property type="match status" value="1"/>
</dbReference>
<dbReference type="FunFam" id="3.30.70.330:FF:000384">
    <property type="entry name" value="Polyadenylate-binding protein"/>
    <property type="match status" value="1"/>
</dbReference>
<dbReference type="Gene3D" id="3.30.70.330">
    <property type="match status" value="4"/>
</dbReference>
<dbReference type="Gene3D" id="1.10.1900.10">
    <property type="entry name" value="c-terminal domain of poly(a) binding protein"/>
    <property type="match status" value="1"/>
</dbReference>
<dbReference type="InterPro" id="IPR012677">
    <property type="entry name" value="Nucleotide-bd_a/b_plait_sf"/>
</dbReference>
<dbReference type="InterPro" id="IPR036053">
    <property type="entry name" value="PABP-dom"/>
</dbReference>
<dbReference type="InterPro" id="IPR006515">
    <property type="entry name" value="PABP_1234"/>
</dbReference>
<dbReference type="InterPro" id="IPR002004">
    <property type="entry name" value="PABP_HYD_C"/>
</dbReference>
<dbReference type="InterPro" id="IPR034364">
    <property type="entry name" value="PABP_RRM1"/>
</dbReference>
<dbReference type="InterPro" id="IPR035979">
    <property type="entry name" value="RBD_domain_sf"/>
</dbReference>
<dbReference type="InterPro" id="IPR045305">
    <property type="entry name" value="RRM2_I_PABPs"/>
</dbReference>
<dbReference type="InterPro" id="IPR000504">
    <property type="entry name" value="RRM_dom"/>
</dbReference>
<dbReference type="NCBIfam" id="TIGR01628">
    <property type="entry name" value="PABP-1234"/>
    <property type="match status" value="1"/>
</dbReference>
<dbReference type="PANTHER" id="PTHR24012">
    <property type="entry name" value="RNA BINDING PROTEIN"/>
    <property type="match status" value="1"/>
</dbReference>
<dbReference type="Pfam" id="PF00658">
    <property type="entry name" value="MLLE"/>
    <property type="match status" value="1"/>
</dbReference>
<dbReference type="Pfam" id="PF00076">
    <property type="entry name" value="RRM_1"/>
    <property type="match status" value="5"/>
</dbReference>
<dbReference type="SMART" id="SM00517">
    <property type="entry name" value="PolyA"/>
    <property type="match status" value="1"/>
</dbReference>
<dbReference type="SMART" id="SM00360">
    <property type="entry name" value="RRM"/>
    <property type="match status" value="4"/>
</dbReference>
<dbReference type="SUPFAM" id="SSF63570">
    <property type="entry name" value="PABC (PABP) domain"/>
    <property type="match status" value="1"/>
</dbReference>
<dbReference type="SUPFAM" id="SSF54928">
    <property type="entry name" value="RNA-binding domain, RBD"/>
    <property type="match status" value="3"/>
</dbReference>
<dbReference type="PROSITE" id="PS51309">
    <property type="entry name" value="PABC"/>
    <property type="match status" value="1"/>
</dbReference>
<dbReference type="PROSITE" id="PS50102">
    <property type="entry name" value="RRM"/>
    <property type="match status" value="4"/>
</dbReference>
<protein>
    <recommendedName>
        <fullName>Polyadenylate-binding protein, cytoplasmic and nuclear</fullName>
        <shortName>PABP</shortName>
        <shortName>Poly(A)-binding protein</shortName>
    </recommendedName>
    <alternativeName>
        <fullName>Polyadenylate tail-binding protein</fullName>
    </alternativeName>
</protein>
<name>PABP_ASPCL</name>
<evidence type="ECO:0000250" key="1"/>
<evidence type="ECO:0000255" key="2">
    <source>
        <dbReference type="PROSITE-ProRule" id="PRU00176"/>
    </source>
</evidence>
<evidence type="ECO:0000255" key="3">
    <source>
        <dbReference type="PROSITE-ProRule" id="PRU00641"/>
    </source>
</evidence>
<evidence type="ECO:0000256" key="4">
    <source>
        <dbReference type="SAM" id="MobiDB-lite"/>
    </source>
</evidence>
<evidence type="ECO:0000305" key="5"/>
<proteinExistence type="inferred from homology"/>